<reference key="1">
    <citation type="submission" date="2007-02" db="EMBL/GenBank/DDBJ databases">
        <title>Complete sequence of chromosome of Shewanella baltica OS155.</title>
        <authorList>
            <consortium name="US DOE Joint Genome Institute"/>
            <person name="Copeland A."/>
            <person name="Lucas S."/>
            <person name="Lapidus A."/>
            <person name="Barry K."/>
            <person name="Detter J.C."/>
            <person name="Glavina del Rio T."/>
            <person name="Hammon N."/>
            <person name="Israni S."/>
            <person name="Dalin E."/>
            <person name="Tice H."/>
            <person name="Pitluck S."/>
            <person name="Sims D.R."/>
            <person name="Brettin T."/>
            <person name="Bruce D."/>
            <person name="Han C."/>
            <person name="Tapia R."/>
            <person name="Brainard J."/>
            <person name="Schmutz J."/>
            <person name="Larimer F."/>
            <person name="Land M."/>
            <person name="Hauser L."/>
            <person name="Kyrpides N."/>
            <person name="Mikhailova N."/>
            <person name="Brettar I."/>
            <person name="Klappenbach J."/>
            <person name="Konstantinidis K."/>
            <person name="Rodrigues J."/>
            <person name="Tiedje J."/>
            <person name="Richardson P."/>
        </authorList>
    </citation>
    <scope>NUCLEOTIDE SEQUENCE [LARGE SCALE GENOMIC DNA]</scope>
    <source>
        <strain>OS155 / ATCC BAA-1091</strain>
    </source>
</reference>
<gene>
    <name evidence="1" type="primary">tig</name>
    <name type="ordered locus">Sbal_1603</name>
</gene>
<proteinExistence type="inferred from homology"/>
<protein>
    <recommendedName>
        <fullName evidence="1">Trigger factor</fullName>
        <shortName evidence="1">TF</shortName>
        <ecNumber evidence="1">5.2.1.8</ecNumber>
    </recommendedName>
    <alternativeName>
        <fullName evidence="1">PPIase</fullName>
    </alternativeName>
</protein>
<feature type="chain" id="PRO_1000022752" description="Trigger factor">
    <location>
        <begin position="1"/>
        <end position="434"/>
    </location>
</feature>
<feature type="domain" description="PPIase FKBP-type" evidence="1">
    <location>
        <begin position="160"/>
        <end position="245"/>
    </location>
</feature>
<keyword id="KW-0131">Cell cycle</keyword>
<keyword id="KW-0132">Cell division</keyword>
<keyword id="KW-0143">Chaperone</keyword>
<keyword id="KW-0963">Cytoplasm</keyword>
<keyword id="KW-0413">Isomerase</keyword>
<keyword id="KW-1185">Reference proteome</keyword>
<keyword id="KW-0697">Rotamase</keyword>
<evidence type="ECO:0000255" key="1">
    <source>
        <dbReference type="HAMAP-Rule" id="MF_00303"/>
    </source>
</evidence>
<accession>A3D304</accession>
<comment type="function">
    <text evidence="1">Involved in protein export. Acts as a chaperone by maintaining the newly synthesized protein in an open conformation. Functions as a peptidyl-prolyl cis-trans isomerase.</text>
</comment>
<comment type="catalytic activity">
    <reaction evidence="1">
        <text>[protein]-peptidylproline (omega=180) = [protein]-peptidylproline (omega=0)</text>
        <dbReference type="Rhea" id="RHEA:16237"/>
        <dbReference type="Rhea" id="RHEA-COMP:10747"/>
        <dbReference type="Rhea" id="RHEA-COMP:10748"/>
        <dbReference type="ChEBI" id="CHEBI:83833"/>
        <dbReference type="ChEBI" id="CHEBI:83834"/>
        <dbReference type="EC" id="5.2.1.8"/>
    </reaction>
</comment>
<comment type="subcellular location">
    <subcellularLocation>
        <location>Cytoplasm</location>
    </subcellularLocation>
    <text evidence="1">About half TF is bound to the ribosome near the polypeptide exit tunnel while the other half is free in the cytoplasm.</text>
</comment>
<comment type="domain">
    <text evidence="1">Consists of 3 domains; the N-terminus binds the ribosome, the middle domain has PPIase activity, while the C-terminus has intrinsic chaperone activity on its own.</text>
</comment>
<comment type="similarity">
    <text evidence="1">Belongs to the FKBP-type PPIase family. Tig subfamily.</text>
</comment>
<organism>
    <name type="scientific">Shewanella baltica (strain OS155 / ATCC BAA-1091)</name>
    <dbReference type="NCBI Taxonomy" id="325240"/>
    <lineage>
        <taxon>Bacteria</taxon>
        <taxon>Pseudomonadati</taxon>
        <taxon>Pseudomonadota</taxon>
        <taxon>Gammaproteobacteria</taxon>
        <taxon>Alteromonadales</taxon>
        <taxon>Shewanellaceae</taxon>
        <taxon>Shewanella</taxon>
    </lineage>
</organism>
<name>TIG_SHEB5</name>
<sequence>MQVSVEATQGLERRLTISVPAEQIEKLVKDSLQREAKRARIPGFRPGKVPITVINKRYGAAIRQDIMGEVMQRNFIEAIIAEKLNPAGAPTFVPGSTDGEKFEFIATFEIYPEVELKGLDAIEVEQPKAEVTDADVDTMIETLRKQHATFAAVEREAADGDKVKMNFVGSVDGEEFEGGKADDFELQLGSGRMIPGFEAGILGHKAGEEFVIDVNFPEEYHAENLKGKAAKFAITLTEVQAANLPEVNDEFAALFGISEGGLEALKAEIRKNMNRELEQALKANVKEQVINGLLANNDITLPKALIDGEVNVLRQQAMQRFGNQTANMPELPAELFTEQAARRVKIGLLLGEVIKTNELKAEDERVQGLIASMASAYEDPSEVVAYYNSNKELMQNMRNVALEEQAVEALLKSAKVTEKEVAFEEFMNKATGRA</sequence>
<dbReference type="EC" id="5.2.1.8" evidence="1"/>
<dbReference type="EMBL" id="CP000563">
    <property type="protein sequence ID" value="ABN61117.1"/>
    <property type="molecule type" value="Genomic_DNA"/>
</dbReference>
<dbReference type="RefSeq" id="WP_006085365.1">
    <property type="nucleotide sequence ID" value="NC_009052.1"/>
</dbReference>
<dbReference type="SMR" id="A3D304"/>
<dbReference type="STRING" id="325240.Sbal_1603"/>
<dbReference type="GeneID" id="11771861"/>
<dbReference type="KEGG" id="sbl:Sbal_1603"/>
<dbReference type="HOGENOM" id="CLU_033058_2_0_6"/>
<dbReference type="OrthoDB" id="9767721at2"/>
<dbReference type="Proteomes" id="UP000001557">
    <property type="component" value="Chromosome"/>
</dbReference>
<dbReference type="GO" id="GO:0005737">
    <property type="term" value="C:cytoplasm"/>
    <property type="evidence" value="ECO:0007669"/>
    <property type="project" value="UniProtKB-SubCell"/>
</dbReference>
<dbReference type="GO" id="GO:0003755">
    <property type="term" value="F:peptidyl-prolyl cis-trans isomerase activity"/>
    <property type="evidence" value="ECO:0007669"/>
    <property type="project" value="UniProtKB-UniRule"/>
</dbReference>
<dbReference type="GO" id="GO:0044183">
    <property type="term" value="F:protein folding chaperone"/>
    <property type="evidence" value="ECO:0007669"/>
    <property type="project" value="TreeGrafter"/>
</dbReference>
<dbReference type="GO" id="GO:0043022">
    <property type="term" value="F:ribosome binding"/>
    <property type="evidence" value="ECO:0007669"/>
    <property type="project" value="TreeGrafter"/>
</dbReference>
<dbReference type="GO" id="GO:0051083">
    <property type="term" value="P:'de novo' cotranslational protein folding"/>
    <property type="evidence" value="ECO:0007669"/>
    <property type="project" value="TreeGrafter"/>
</dbReference>
<dbReference type="GO" id="GO:0051301">
    <property type="term" value="P:cell division"/>
    <property type="evidence" value="ECO:0007669"/>
    <property type="project" value="UniProtKB-KW"/>
</dbReference>
<dbReference type="GO" id="GO:0061077">
    <property type="term" value="P:chaperone-mediated protein folding"/>
    <property type="evidence" value="ECO:0007669"/>
    <property type="project" value="TreeGrafter"/>
</dbReference>
<dbReference type="GO" id="GO:0015031">
    <property type="term" value="P:protein transport"/>
    <property type="evidence" value="ECO:0007669"/>
    <property type="project" value="UniProtKB-UniRule"/>
</dbReference>
<dbReference type="GO" id="GO:0043335">
    <property type="term" value="P:protein unfolding"/>
    <property type="evidence" value="ECO:0007669"/>
    <property type="project" value="TreeGrafter"/>
</dbReference>
<dbReference type="FunFam" id="3.10.50.40:FF:000001">
    <property type="entry name" value="Trigger factor"/>
    <property type="match status" value="1"/>
</dbReference>
<dbReference type="FunFam" id="3.30.70.1050:FF:000001">
    <property type="entry name" value="Trigger factor"/>
    <property type="match status" value="1"/>
</dbReference>
<dbReference type="Gene3D" id="3.10.50.40">
    <property type="match status" value="1"/>
</dbReference>
<dbReference type="Gene3D" id="3.30.70.1050">
    <property type="entry name" value="Trigger factor ribosome-binding domain"/>
    <property type="match status" value="1"/>
</dbReference>
<dbReference type="Gene3D" id="1.10.3120.10">
    <property type="entry name" value="Trigger factor, C-terminal domain"/>
    <property type="match status" value="1"/>
</dbReference>
<dbReference type="HAMAP" id="MF_00303">
    <property type="entry name" value="Trigger_factor_Tig"/>
    <property type="match status" value="1"/>
</dbReference>
<dbReference type="InterPro" id="IPR046357">
    <property type="entry name" value="PPIase_dom_sf"/>
</dbReference>
<dbReference type="InterPro" id="IPR001179">
    <property type="entry name" value="PPIase_FKBP_dom"/>
</dbReference>
<dbReference type="InterPro" id="IPR005215">
    <property type="entry name" value="Trig_fac"/>
</dbReference>
<dbReference type="InterPro" id="IPR008880">
    <property type="entry name" value="Trigger_fac_C"/>
</dbReference>
<dbReference type="InterPro" id="IPR037041">
    <property type="entry name" value="Trigger_fac_C_sf"/>
</dbReference>
<dbReference type="InterPro" id="IPR008881">
    <property type="entry name" value="Trigger_fac_ribosome-bd_bac"/>
</dbReference>
<dbReference type="InterPro" id="IPR036611">
    <property type="entry name" value="Trigger_fac_ribosome-bd_sf"/>
</dbReference>
<dbReference type="InterPro" id="IPR027304">
    <property type="entry name" value="Trigger_fact/SurA_dom_sf"/>
</dbReference>
<dbReference type="NCBIfam" id="TIGR00115">
    <property type="entry name" value="tig"/>
    <property type="match status" value="1"/>
</dbReference>
<dbReference type="PANTHER" id="PTHR30560">
    <property type="entry name" value="TRIGGER FACTOR CHAPERONE AND PEPTIDYL-PROLYL CIS/TRANS ISOMERASE"/>
    <property type="match status" value="1"/>
</dbReference>
<dbReference type="PANTHER" id="PTHR30560:SF3">
    <property type="entry name" value="TRIGGER FACTOR-LIKE PROTEIN TIG, CHLOROPLASTIC"/>
    <property type="match status" value="1"/>
</dbReference>
<dbReference type="Pfam" id="PF00254">
    <property type="entry name" value="FKBP_C"/>
    <property type="match status" value="1"/>
</dbReference>
<dbReference type="Pfam" id="PF05698">
    <property type="entry name" value="Trigger_C"/>
    <property type="match status" value="1"/>
</dbReference>
<dbReference type="Pfam" id="PF05697">
    <property type="entry name" value="Trigger_N"/>
    <property type="match status" value="1"/>
</dbReference>
<dbReference type="PIRSF" id="PIRSF003095">
    <property type="entry name" value="Trigger_factor"/>
    <property type="match status" value="1"/>
</dbReference>
<dbReference type="SUPFAM" id="SSF54534">
    <property type="entry name" value="FKBP-like"/>
    <property type="match status" value="1"/>
</dbReference>
<dbReference type="SUPFAM" id="SSF109998">
    <property type="entry name" value="Triger factor/SurA peptide-binding domain-like"/>
    <property type="match status" value="1"/>
</dbReference>
<dbReference type="SUPFAM" id="SSF102735">
    <property type="entry name" value="Trigger factor ribosome-binding domain"/>
    <property type="match status" value="1"/>
</dbReference>
<dbReference type="PROSITE" id="PS50059">
    <property type="entry name" value="FKBP_PPIASE"/>
    <property type="match status" value="1"/>
</dbReference>